<dbReference type="EC" id="3.1.1.2" evidence="6 7 11 12 20"/>
<dbReference type="EC" id="3.1.1.81" evidence="6 7"/>
<dbReference type="EC" id="3.1.8.1" evidence="6 7 11 12 20"/>
<dbReference type="EMBL" id="M63012">
    <property type="protein sequence ID" value="AAB59538.1"/>
    <property type="molecule type" value="mRNA"/>
</dbReference>
<dbReference type="EMBL" id="M63013">
    <property type="protein sequence ID" value="AAA60142.1"/>
    <property type="molecule type" value="mRNA"/>
</dbReference>
<dbReference type="EMBL" id="M63014">
    <property type="protein sequence ID" value="AAA60143.1"/>
    <property type="molecule type" value="mRNA"/>
</dbReference>
<dbReference type="EMBL" id="S56555">
    <property type="protein sequence ID" value="AAB25717.1"/>
    <property type="molecule type" value="Genomic_DNA"/>
</dbReference>
<dbReference type="EMBL" id="S56546">
    <property type="protein sequence ID" value="AAB25717.1"/>
    <property type="status" value="JOINED"/>
    <property type="molecule type" value="Genomic_DNA"/>
</dbReference>
<dbReference type="EMBL" id="S56548">
    <property type="protein sequence ID" value="AAB25717.1"/>
    <property type="status" value="JOINED"/>
    <property type="molecule type" value="Genomic_DNA"/>
</dbReference>
<dbReference type="EMBL" id="S64696">
    <property type="protein sequence ID" value="AAB27899.1"/>
    <property type="molecule type" value="mRNA"/>
</dbReference>
<dbReference type="EMBL" id="S64615">
    <property type="protein sequence ID" value="AAB27714.2"/>
    <property type="molecule type" value="mRNA"/>
</dbReference>
<dbReference type="EMBL" id="U55885">
    <property type="protein sequence ID" value="AAB41835.1"/>
    <property type="molecule type" value="Genomic_DNA"/>
</dbReference>
<dbReference type="EMBL" id="U55877">
    <property type="protein sequence ID" value="AAB41835.1"/>
    <property type="status" value="JOINED"/>
    <property type="molecule type" value="Genomic_DNA"/>
</dbReference>
<dbReference type="EMBL" id="U55878">
    <property type="protein sequence ID" value="AAB41835.1"/>
    <property type="status" value="JOINED"/>
    <property type="molecule type" value="Genomic_DNA"/>
</dbReference>
<dbReference type="EMBL" id="U55879">
    <property type="protein sequence ID" value="AAB41835.1"/>
    <property type="status" value="JOINED"/>
    <property type="molecule type" value="Genomic_DNA"/>
</dbReference>
<dbReference type="EMBL" id="U55880">
    <property type="protein sequence ID" value="AAB41835.1"/>
    <property type="status" value="JOINED"/>
    <property type="molecule type" value="Genomic_DNA"/>
</dbReference>
<dbReference type="EMBL" id="U55881">
    <property type="protein sequence ID" value="AAB41835.1"/>
    <property type="status" value="JOINED"/>
    <property type="molecule type" value="Genomic_DNA"/>
</dbReference>
<dbReference type="EMBL" id="U55882">
    <property type="protein sequence ID" value="AAB41835.1"/>
    <property type="status" value="JOINED"/>
    <property type="molecule type" value="Genomic_DNA"/>
</dbReference>
<dbReference type="EMBL" id="U55883">
    <property type="protein sequence ID" value="AAB41835.1"/>
    <property type="status" value="JOINED"/>
    <property type="molecule type" value="Genomic_DNA"/>
</dbReference>
<dbReference type="EMBL" id="D84371">
    <property type="protein sequence ID" value="BAA12327.1"/>
    <property type="molecule type" value="mRNA"/>
</dbReference>
<dbReference type="EMBL" id="U53784">
    <property type="protein sequence ID" value="AAA97957.1"/>
    <property type="molecule type" value="mRNA"/>
</dbReference>
<dbReference type="EMBL" id="Z70723">
    <property type="protein sequence ID" value="CAA94728.1"/>
    <property type="molecule type" value="mRNA"/>
</dbReference>
<dbReference type="EMBL" id="AK314027">
    <property type="protein sequence ID" value="BAG36737.1"/>
    <property type="molecule type" value="mRNA"/>
</dbReference>
<dbReference type="EMBL" id="AF539592">
    <property type="protein sequence ID" value="AAM97935.1"/>
    <property type="molecule type" value="Genomic_DNA"/>
</dbReference>
<dbReference type="EMBL" id="AC004022">
    <property type="protein sequence ID" value="AAC35293.1"/>
    <property type="molecule type" value="Genomic_DNA"/>
</dbReference>
<dbReference type="EMBL" id="CH236949">
    <property type="protein sequence ID" value="EAL24133.1"/>
    <property type="molecule type" value="Genomic_DNA"/>
</dbReference>
<dbReference type="EMBL" id="CH471091">
    <property type="protein sequence ID" value="EAW76771.1"/>
    <property type="molecule type" value="Genomic_DNA"/>
</dbReference>
<dbReference type="EMBL" id="BC074719">
    <property type="protein sequence ID" value="AAH74719.1"/>
    <property type="molecule type" value="mRNA"/>
</dbReference>
<dbReference type="CCDS" id="CCDS5638.1"/>
<dbReference type="PIR" id="A45451">
    <property type="entry name" value="A45451"/>
</dbReference>
<dbReference type="RefSeq" id="NP_000437.3">
    <property type="nucleotide sequence ID" value="NM_000446.5"/>
</dbReference>
<dbReference type="PDB" id="1V04">
    <property type="method" value="X-ray"/>
    <property type="resolution" value="2.20 A"/>
    <property type="chains" value="A=1-353"/>
</dbReference>
<dbReference type="PDBsum" id="1V04"/>
<dbReference type="SMR" id="P27169"/>
<dbReference type="BioGRID" id="111440">
    <property type="interactions" value="22"/>
</dbReference>
<dbReference type="FunCoup" id="P27169">
    <property type="interactions" value="15"/>
</dbReference>
<dbReference type="IntAct" id="P27169">
    <property type="interactions" value="13"/>
</dbReference>
<dbReference type="STRING" id="9606.ENSP00000222381"/>
<dbReference type="BindingDB" id="P27169"/>
<dbReference type="ChEMBL" id="CHEMBL3167"/>
<dbReference type="DrugBank" id="DB01327">
    <property type="generic name" value="Cefazolin"/>
</dbReference>
<dbReference type="DrugBank" id="DB09130">
    <property type="generic name" value="Copper"/>
</dbReference>
<dbReference type="DrugBank" id="DB01395">
    <property type="generic name" value="Drospirenone"/>
</dbReference>
<dbReference type="DrugBank" id="DB14598">
    <property type="generic name" value="Edetate calcium disodium anhydrous"/>
</dbReference>
<dbReference type="DrugBank" id="DB14600">
    <property type="generic name" value="Edetate disodium anhydrous"/>
</dbReference>
<dbReference type="DrugBank" id="DB14596">
    <property type="generic name" value="Loteprednol etabonate"/>
</dbReference>
<dbReference type="DrugBank" id="DB00218">
    <property type="generic name" value="Moxifloxacin"/>
</dbReference>
<dbReference type="DrugBank" id="DB01085">
    <property type="generic name" value="Pilocarpine"/>
</dbReference>
<dbReference type="DrugBank" id="DB01593">
    <property type="generic name" value="Zinc"/>
</dbReference>
<dbReference type="DrugBank" id="DB14487">
    <property type="generic name" value="Zinc acetate"/>
</dbReference>
<dbReference type="DrugBank" id="DB14533">
    <property type="generic name" value="Zinc chloride"/>
</dbReference>
<dbReference type="DrugBank" id="DB14548">
    <property type="generic name" value="Zinc sulfate, unspecified form"/>
</dbReference>
<dbReference type="TCDB" id="1.A.6.2.6">
    <property type="family name" value="the epithelial na(+) channel (enac) family"/>
</dbReference>
<dbReference type="GlyConnect" id="726">
    <property type="glycosylation" value="20 N-Linked glycans (3 sites)"/>
</dbReference>
<dbReference type="GlyCosmos" id="P27169">
    <property type="glycosylation" value="4 sites, 30 glycans"/>
</dbReference>
<dbReference type="GlyGen" id="P27169">
    <property type="glycosylation" value="5 sites, 54 N-linked glycans (3 sites), 1 O-linked glycan (1 site)"/>
</dbReference>
<dbReference type="iPTMnet" id="P27169"/>
<dbReference type="PhosphoSitePlus" id="P27169"/>
<dbReference type="BioMuta" id="PON1"/>
<dbReference type="DMDM" id="308153572"/>
<dbReference type="CPTAC" id="CPTAC-2233"/>
<dbReference type="CPTAC" id="non-CPTAC-2695"/>
<dbReference type="jPOST" id="P27169"/>
<dbReference type="MassIVE" id="P27169"/>
<dbReference type="PaxDb" id="9606-ENSP00000222381"/>
<dbReference type="PeptideAtlas" id="P27169"/>
<dbReference type="ProteomicsDB" id="54376"/>
<dbReference type="Pumba" id="P27169"/>
<dbReference type="Antibodypedia" id="883">
    <property type="antibodies" value="644 antibodies from 38 providers"/>
</dbReference>
<dbReference type="DNASU" id="5444"/>
<dbReference type="Ensembl" id="ENST00000222381.8">
    <property type="protein sequence ID" value="ENSP00000222381.3"/>
    <property type="gene ID" value="ENSG00000005421.9"/>
</dbReference>
<dbReference type="GeneID" id="5444"/>
<dbReference type="KEGG" id="hsa:5444"/>
<dbReference type="MANE-Select" id="ENST00000222381.8">
    <property type="protein sequence ID" value="ENSP00000222381.3"/>
    <property type="RefSeq nucleotide sequence ID" value="NM_000446.7"/>
    <property type="RefSeq protein sequence ID" value="NP_000437.3"/>
</dbReference>
<dbReference type="UCSC" id="uc003uns.4">
    <property type="organism name" value="human"/>
</dbReference>
<dbReference type="AGR" id="HGNC:9204"/>
<dbReference type="CTD" id="5444"/>
<dbReference type="DisGeNET" id="5444"/>
<dbReference type="GeneCards" id="PON1"/>
<dbReference type="HGNC" id="HGNC:9204">
    <property type="gene designation" value="PON1"/>
</dbReference>
<dbReference type="HPA" id="ENSG00000005421">
    <property type="expression patterns" value="Tissue enriched (liver)"/>
</dbReference>
<dbReference type="MalaCards" id="PON1"/>
<dbReference type="MIM" id="168820">
    <property type="type" value="gene+phenotype"/>
</dbReference>
<dbReference type="MIM" id="612633">
    <property type="type" value="phenotype"/>
</dbReference>
<dbReference type="neXtProt" id="NX_P27169"/>
<dbReference type="OpenTargets" id="ENSG00000005421"/>
<dbReference type="Orphanet" id="803">
    <property type="disease" value="Amyotrophic lateral sclerosis"/>
</dbReference>
<dbReference type="PharmGKB" id="PA33529"/>
<dbReference type="VEuPathDB" id="HostDB:ENSG00000005421"/>
<dbReference type="eggNOG" id="ENOG502S3B5">
    <property type="taxonomic scope" value="Eukaryota"/>
</dbReference>
<dbReference type="GeneTree" id="ENSGT00390000008932"/>
<dbReference type="HOGENOM" id="CLU_049839_0_1_1"/>
<dbReference type="InParanoid" id="P27169"/>
<dbReference type="OMA" id="VVSEGYH"/>
<dbReference type="OrthoDB" id="423498at2759"/>
<dbReference type="PAN-GO" id="P27169">
    <property type="GO annotations" value="4 GO annotations based on evolutionary models"/>
</dbReference>
<dbReference type="PhylomeDB" id="P27169"/>
<dbReference type="TreeFam" id="TF322436"/>
<dbReference type="BRENDA" id="3.1.1.2">
    <property type="organism ID" value="2681"/>
</dbReference>
<dbReference type="BRENDA" id="3.1.1.25">
    <property type="organism ID" value="2681"/>
</dbReference>
<dbReference type="BRENDA" id="3.1.1.81">
    <property type="organism ID" value="2681"/>
</dbReference>
<dbReference type="BRENDA" id="3.1.8.1">
    <property type="organism ID" value="2681"/>
</dbReference>
<dbReference type="BRENDA" id="3.1.8.2">
    <property type="organism ID" value="2681"/>
</dbReference>
<dbReference type="PathwayCommons" id="P27169"/>
<dbReference type="Reactome" id="R-HSA-2142688">
    <property type="pathway name" value="Synthesis of 5-eicosatetraenoic acids"/>
</dbReference>
<dbReference type="Reactome" id="R-HSA-9754706">
    <property type="pathway name" value="Atorvastatin ADME"/>
</dbReference>
<dbReference type="SABIO-RK" id="P27169"/>
<dbReference type="SignaLink" id="P27169"/>
<dbReference type="SIGNOR" id="P27169"/>
<dbReference type="BioGRID-ORCS" id="5444">
    <property type="hits" value="15 hits in 1155 CRISPR screens"/>
</dbReference>
<dbReference type="ChiTaRS" id="PON1">
    <property type="organism name" value="human"/>
</dbReference>
<dbReference type="GeneWiki" id="PON1"/>
<dbReference type="GenomeRNAi" id="5444"/>
<dbReference type="Pharos" id="P27169">
    <property type="development level" value="Tbio"/>
</dbReference>
<dbReference type="PRO" id="PR:P27169"/>
<dbReference type="Proteomes" id="UP000005640">
    <property type="component" value="Chromosome 7"/>
</dbReference>
<dbReference type="RNAct" id="P27169">
    <property type="molecule type" value="protein"/>
</dbReference>
<dbReference type="Bgee" id="ENSG00000005421">
    <property type="expression patterns" value="Expressed in right lobe of liver and 103 other cell types or tissues"/>
</dbReference>
<dbReference type="ExpressionAtlas" id="P27169">
    <property type="expression patterns" value="baseline and differential"/>
</dbReference>
<dbReference type="GO" id="GO:0072562">
    <property type="term" value="C:blood microparticle"/>
    <property type="evidence" value="ECO:0007005"/>
    <property type="project" value="UniProtKB"/>
</dbReference>
<dbReference type="GO" id="GO:0005789">
    <property type="term" value="C:endoplasmic reticulum membrane"/>
    <property type="evidence" value="ECO:0000304"/>
    <property type="project" value="Reactome"/>
</dbReference>
<dbReference type="GO" id="GO:0070062">
    <property type="term" value="C:extracellular exosome"/>
    <property type="evidence" value="ECO:0007005"/>
    <property type="project" value="UniProtKB"/>
</dbReference>
<dbReference type="GO" id="GO:0005576">
    <property type="term" value="C:extracellular region"/>
    <property type="evidence" value="ECO:0000304"/>
    <property type="project" value="Reactome"/>
</dbReference>
<dbReference type="GO" id="GO:0005615">
    <property type="term" value="C:extracellular space"/>
    <property type="evidence" value="ECO:0000314"/>
    <property type="project" value="BHF-UCL"/>
</dbReference>
<dbReference type="GO" id="GO:0034364">
    <property type="term" value="C:high-density lipoprotein particle"/>
    <property type="evidence" value="ECO:0000314"/>
    <property type="project" value="BHF-UCL"/>
</dbReference>
<dbReference type="GO" id="GO:0034366">
    <property type="term" value="C:spherical high-density lipoprotein particle"/>
    <property type="evidence" value="ECO:0000314"/>
    <property type="project" value="BHF-UCL"/>
</dbReference>
<dbReference type="GO" id="GO:0102007">
    <property type="term" value="F:acyl-L-homoserine-lactone lactonohydrolase activity"/>
    <property type="evidence" value="ECO:0000314"/>
    <property type="project" value="ARUK-UCL"/>
</dbReference>
<dbReference type="GO" id="GO:0004063">
    <property type="term" value="F:aryldialkylphosphatase activity"/>
    <property type="evidence" value="ECO:0000314"/>
    <property type="project" value="UniProtKB"/>
</dbReference>
<dbReference type="GO" id="GO:0004064">
    <property type="term" value="F:arylesterase activity"/>
    <property type="evidence" value="ECO:0000314"/>
    <property type="project" value="UniProtKB"/>
</dbReference>
<dbReference type="GO" id="GO:0005509">
    <property type="term" value="F:calcium ion binding"/>
    <property type="evidence" value="ECO:0000314"/>
    <property type="project" value="UniProtKB"/>
</dbReference>
<dbReference type="GO" id="GO:0005543">
    <property type="term" value="F:phospholipid binding"/>
    <property type="evidence" value="ECO:0000314"/>
    <property type="project" value="BHF-UCL"/>
</dbReference>
<dbReference type="GO" id="GO:0042803">
    <property type="term" value="F:protein homodimerization activity"/>
    <property type="evidence" value="ECO:0000353"/>
    <property type="project" value="BHF-UCL"/>
</dbReference>
<dbReference type="GO" id="GO:0046395">
    <property type="term" value="P:carboxylic acid catabolic process"/>
    <property type="evidence" value="ECO:0000314"/>
    <property type="project" value="BHF-UCL"/>
</dbReference>
<dbReference type="GO" id="GO:0008203">
    <property type="term" value="P:cholesterol metabolic process"/>
    <property type="evidence" value="ECO:0007669"/>
    <property type="project" value="Ensembl"/>
</dbReference>
<dbReference type="GO" id="GO:1901335">
    <property type="term" value="P:lactone catabolic process"/>
    <property type="evidence" value="ECO:0000314"/>
    <property type="project" value="BHF-UCL"/>
</dbReference>
<dbReference type="GO" id="GO:0046434">
    <property type="term" value="P:organophosphate catabolic process"/>
    <property type="evidence" value="ECO:0000314"/>
    <property type="project" value="BHF-UCL"/>
</dbReference>
<dbReference type="GO" id="GO:0046470">
    <property type="term" value="P:phosphatidylcholine metabolic process"/>
    <property type="evidence" value="ECO:0000314"/>
    <property type="project" value="BHF-UCL"/>
</dbReference>
<dbReference type="GO" id="GO:0010875">
    <property type="term" value="P:positive regulation of cholesterol efflux"/>
    <property type="evidence" value="ECO:0000314"/>
    <property type="project" value="BHF-UCL"/>
</dbReference>
<dbReference type="GO" id="GO:0009636">
    <property type="term" value="P:response to toxic substance"/>
    <property type="evidence" value="ECO:0000314"/>
    <property type="project" value="ARUK-UCL"/>
</dbReference>
<dbReference type="FunFam" id="2.120.10.30:FF:000023">
    <property type="entry name" value="Serum paraoxonase/arylesterase 2"/>
    <property type="match status" value="1"/>
</dbReference>
<dbReference type="Gene3D" id="2.120.10.30">
    <property type="entry name" value="TolB, C-terminal domain"/>
    <property type="match status" value="1"/>
</dbReference>
<dbReference type="InterPro" id="IPR011042">
    <property type="entry name" value="6-blade_b-propeller_TolB-like"/>
</dbReference>
<dbReference type="InterPro" id="IPR002640">
    <property type="entry name" value="Arylesterase"/>
</dbReference>
<dbReference type="InterPro" id="IPR008363">
    <property type="entry name" value="Paraoxonase1"/>
</dbReference>
<dbReference type="InterPro" id="IPR051288">
    <property type="entry name" value="Serum_paraoxonase/arylesterase"/>
</dbReference>
<dbReference type="PANTHER" id="PTHR11799">
    <property type="entry name" value="PARAOXONASE"/>
    <property type="match status" value="1"/>
</dbReference>
<dbReference type="PANTHER" id="PTHR11799:SF16">
    <property type="entry name" value="SERUM PARAOXONASE_ARYLESTERASE 1"/>
    <property type="match status" value="1"/>
</dbReference>
<dbReference type="Pfam" id="PF01731">
    <property type="entry name" value="Arylesterase"/>
    <property type="match status" value="1"/>
</dbReference>
<dbReference type="PRINTS" id="PR01785">
    <property type="entry name" value="PARAOXONASE"/>
</dbReference>
<dbReference type="PRINTS" id="PR01786">
    <property type="entry name" value="PARAOXONASE1"/>
</dbReference>
<dbReference type="SUPFAM" id="SSF63829">
    <property type="entry name" value="Calcium-dependent phosphotriesterase"/>
    <property type="match status" value="1"/>
</dbReference>
<keyword id="KW-0002">3D-structure</keyword>
<keyword id="KW-0106">Calcium</keyword>
<keyword id="KW-0903">Direct protein sequencing</keyword>
<keyword id="KW-1015">Disulfide bond</keyword>
<keyword id="KW-0325">Glycoprotein</keyword>
<keyword id="KW-0345">HDL</keyword>
<keyword id="KW-0378">Hydrolase</keyword>
<keyword id="KW-0479">Metal-binding</keyword>
<keyword id="KW-1267">Proteomics identification</keyword>
<keyword id="KW-1185">Reference proteome</keyword>
<keyword id="KW-0964">Secreted</keyword>
<keyword id="KW-0732">Signal</keyword>
<feature type="initiator methionine" description="Removed" evidence="12 18 19">
    <location>
        <position position="1"/>
    </location>
</feature>
<feature type="chain" id="PRO_0000223281" description="Serum paraoxonase/arylesterase 1">
    <location>
        <begin position="2"/>
        <end position="355"/>
    </location>
</feature>
<feature type="signal peptide" description="Not cleaved">
    <location>
        <begin position="2"/>
        <end status="unknown"/>
    </location>
</feature>
<feature type="active site" description="Proton acceptor" evidence="26">
    <location>
        <position position="115"/>
    </location>
</feature>
<feature type="binding site">
    <location>
        <position position="53"/>
    </location>
    <ligand>
        <name>Ca(2+)</name>
        <dbReference type="ChEBI" id="CHEBI:29108"/>
        <label>1</label>
        <note>catalytic</note>
    </ligand>
</feature>
<feature type="binding site">
    <location>
        <position position="54"/>
    </location>
    <ligand>
        <name>Ca(2+)</name>
        <dbReference type="ChEBI" id="CHEBI:29108"/>
        <label>2</label>
    </ligand>
</feature>
<feature type="binding site">
    <location>
        <position position="117"/>
    </location>
    <ligand>
        <name>Ca(2+)</name>
        <dbReference type="ChEBI" id="CHEBI:29108"/>
        <label>2</label>
    </ligand>
</feature>
<feature type="binding site">
    <location>
        <position position="168"/>
    </location>
    <ligand>
        <name>Ca(2+)</name>
        <dbReference type="ChEBI" id="CHEBI:29108"/>
        <label>1</label>
        <note>catalytic</note>
    </ligand>
</feature>
<feature type="binding site">
    <location>
        <position position="169"/>
    </location>
    <ligand>
        <name>Ca(2+)</name>
        <dbReference type="ChEBI" id="CHEBI:29108"/>
        <label>2</label>
    </ligand>
</feature>
<feature type="binding site">
    <location>
        <position position="224"/>
    </location>
    <ligand>
        <name>Ca(2+)</name>
        <dbReference type="ChEBI" id="CHEBI:29108"/>
        <label>1</label>
        <note>catalytic</note>
    </ligand>
</feature>
<feature type="binding site">
    <location>
        <position position="269"/>
    </location>
    <ligand>
        <name>Ca(2+)</name>
        <dbReference type="ChEBI" id="CHEBI:29108"/>
        <label>1</label>
        <note>catalytic</note>
    </ligand>
</feature>
<feature type="binding site">
    <location>
        <position position="270"/>
    </location>
    <ligand>
        <name>Ca(2+)</name>
        <dbReference type="ChEBI" id="CHEBI:29108"/>
        <label>1</label>
        <note>catalytic</note>
    </ligand>
</feature>
<feature type="glycosylation site" description="N-linked (GlcNAc...) asparagine" evidence="5 8 14">
    <location>
        <position position="253"/>
    </location>
</feature>
<feature type="glycosylation site" description="N-linked (GlcNAc...) asparagine" evidence="1">
    <location>
        <position position="270"/>
    </location>
</feature>
<feature type="glycosylation site" description="N-linked (GlcNAc...) asparagine" evidence="8 14">
    <location>
        <position position="324"/>
    </location>
</feature>
<feature type="disulfide bond" description="In form B" evidence="6 18">
    <location>
        <begin position="42"/>
        <end position="353"/>
    </location>
</feature>
<feature type="sequence variant" id="VAR_006043" description="In dbSNP:rs854560." evidence="4 10 16 20 21 22">
    <original>L</original>
    <variation>M</variation>
    <location>
        <position position="55"/>
    </location>
</feature>
<feature type="sequence variant" id="VAR_015882" description="Probable risk factor for prostate cancer; results in decreased activity; dbSNP:rs72552787." evidence="3">
    <original>I</original>
    <variation>V</variation>
    <location>
        <position position="102"/>
    </location>
</feature>
<feature type="sequence variant" id="VAR_055342" description="In dbSNP:rs13306698.">
    <original>R</original>
    <variation>G</variation>
    <location>
        <position position="160"/>
    </location>
</feature>
<feature type="sequence variant" id="VAR_006044" description="In allozyme B; increased arylesterase activity; dbSNP:rs662." evidence="10 13 16 17 20 21 23">
    <original>Q</original>
    <variation>R</variation>
    <location>
        <position position="192"/>
    </location>
</feature>
<feature type="mutagenesis site" description="The signal peptide is cleaved; not associated with HDL." evidence="2">
    <original>HQ</original>
    <variation>AA</variation>
    <location>
        <begin position="20"/>
        <end position="21"/>
    </location>
</feature>
<feature type="mutagenesis site" description="Reduces activity 10000-fold." evidence="6">
    <original>H</original>
    <variation>Q</variation>
    <location>
        <position position="115"/>
    </location>
</feature>
<feature type="mutagenesis site" description="Substantially reduced activity." evidence="6">
    <original>H</original>
    <variation>Q</variation>
    <location>
        <position position="134"/>
    </location>
</feature>
<feature type="mutagenesis site" description="No loss of activity." evidence="15">
    <original>C</original>
    <variation>A</variation>
    <variation>S</variation>
    <location>
        <position position="284"/>
    </location>
</feature>
<feature type="helix" evidence="27">
    <location>
        <begin position="19"/>
        <end position="27"/>
    </location>
</feature>
<feature type="turn" evidence="27">
    <location>
        <begin position="28"/>
        <end position="31"/>
    </location>
</feature>
<feature type="strand" evidence="27">
    <location>
        <begin position="54"/>
        <end position="57"/>
    </location>
</feature>
<feature type="strand" evidence="27">
    <location>
        <begin position="61"/>
        <end position="67"/>
    </location>
</feature>
<feature type="strand" evidence="27">
    <location>
        <begin position="84"/>
        <end position="89"/>
    </location>
</feature>
<feature type="strand" evidence="27">
    <location>
        <begin position="92"/>
        <end position="94"/>
    </location>
</feature>
<feature type="strand" evidence="27">
    <location>
        <begin position="97"/>
        <end position="99"/>
    </location>
</feature>
<feature type="strand" evidence="27">
    <location>
        <begin position="101"/>
        <end position="103"/>
    </location>
</feature>
<feature type="strand" evidence="27">
    <location>
        <begin position="105"/>
        <end position="107"/>
    </location>
</feature>
<feature type="helix" evidence="27">
    <location>
        <begin position="109"/>
        <end position="111"/>
    </location>
</feature>
<feature type="strand" evidence="27">
    <location>
        <begin position="114"/>
        <end position="121"/>
    </location>
</feature>
<feature type="strand" evidence="27">
    <location>
        <begin position="127"/>
        <end position="133"/>
    </location>
</feature>
<feature type="strand" evidence="27">
    <location>
        <begin position="140"/>
        <end position="147"/>
    </location>
</feature>
<feature type="turn" evidence="27">
    <location>
        <begin position="148"/>
        <end position="151"/>
    </location>
</feature>
<feature type="strand" evidence="27">
    <location>
        <begin position="152"/>
        <end position="159"/>
    </location>
</feature>
<feature type="strand" evidence="27">
    <location>
        <begin position="165"/>
        <end position="174"/>
    </location>
</feature>
<feature type="strand" evidence="27">
    <location>
        <begin position="177"/>
        <end position="183"/>
    </location>
</feature>
<feature type="helix" evidence="27">
    <location>
        <begin position="189"/>
        <end position="197"/>
    </location>
</feature>
<feature type="strand" evidence="27">
    <location>
        <begin position="203"/>
        <end position="208"/>
    </location>
</feature>
<feature type="strand" evidence="27">
    <location>
        <begin position="213"/>
        <end position="228"/>
    </location>
</feature>
<feature type="strand" evidence="27">
    <location>
        <begin position="232"/>
        <end position="239"/>
    </location>
</feature>
<feature type="turn" evidence="27">
    <location>
        <begin position="240"/>
        <end position="243"/>
    </location>
</feature>
<feature type="strand" evidence="27">
    <location>
        <begin position="244"/>
        <end position="250"/>
    </location>
</feature>
<feature type="strand" evidence="27">
    <location>
        <begin position="256"/>
        <end position="263"/>
    </location>
</feature>
<feature type="strand" evidence="27">
    <location>
        <begin position="265"/>
        <end position="273"/>
    </location>
</feature>
<feature type="turn" evidence="27">
    <location>
        <begin position="275"/>
        <end position="277"/>
    </location>
</feature>
<feature type="strand" evidence="27">
    <location>
        <begin position="280"/>
        <end position="286"/>
    </location>
</feature>
<feature type="helix" evidence="27">
    <location>
        <begin position="288"/>
        <end position="292"/>
    </location>
</feature>
<feature type="strand" evidence="27">
    <location>
        <begin position="302"/>
        <end position="308"/>
    </location>
</feature>
<feature type="strand" evidence="27">
    <location>
        <begin position="312"/>
        <end position="314"/>
    </location>
</feature>
<feature type="strand" evidence="27">
    <location>
        <begin position="316"/>
        <end position="323"/>
    </location>
</feature>
<feature type="strand" evidence="27">
    <location>
        <begin position="325"/>
        <end position="328"/>
    </location>
</feature>
<feature type="strand" evidence="27">
    <location>
        <begin position="330"/>
        <end position="337"/>
    </location>
</feature>
<feature type="strand" evidence="27">
    <location>
        <begin position="340"/>
        <end position="348"/>
    </location>
</feature>
<feature type="strand" evidence="27">
    <location>
        <begin position="350"/>
        <end position="353"/>
    </location>
</feature>
<proteinExistence type="evidence at protein level"/>
<evidence type="ECO:0000255" key="1"/>
<evidence type="ECO:0000269" key="2">
    <source>
    </source>
</evidence>
<evidence type="ECO:0000269" key="3">
    <source>
    </source>
</evidence>
<evidence type="ECO:0000269" key="4">
    <source>
    </source>
</evidence>
<evidence type="ECO:0000269" key="5">
    <source>
    </source>
</evidence>
<evidence type="ECO:0000269" key="6">
    <source>
    </source>
</evidence>
<evidence type="ECO:0000269" key="7">
    <source>
    </source>
</evidence>
<evidence type="ECO:0000269" key="8">
    <source>
    </source>
</evidence>
<evidence type="ECO:0000269" key="9">
    <source>
    </source>
</evidence>
<evidence type="ECO:0000269" key="10">
    <source>
    </source>
</evidence>
<evidence type="ECO:0000269" key="11">
    <source>
    </source>
</evidence>
<evidence type="ECO:0000269" key="12">
    <source>
    </source>
</evidence>
<evidence type="ECO:0000269" key="13">
    <source>
    </source>
</evidence>
<evidence type="ECO:0000269" key="14">
    <source>
    </source>
</evidence>
<evidence type="ECO:0000269" key="15">
    <source>
    </source>
</evidence>
<evidence type="ECO:0000269" key="16">
    <source>
    </source>
</evidence>
<evidence type="ECO:0000269" key="17">
    <source>
    </source>
</evidence>
<evidence type="ECO:0000269" key="18">
    <source>
    </source>
</evidence>
<evidence type="ECO:0000269" key="19">
    <source>
    </source>
</evidence>
<evidence type="ECO:0000269" key="20">
    <source>
    </source>
</evidence>
<evidence type="ECO:0000269" key="21">
    <source>
    </source>
</evidence>
<evidence type="ECO:0000269" key="22">
    <source>
    </source>
</evidence>
<evidence type="ECO:0000269" key="23">
    <source ref="8"/>
</evidence>
<evidence type="ECO:0000303" key="24">
    <source>
    </source>
</evidence>
<evidence type="ECO:0000303" key="25">
    <source>
    </source>
</evidence>
<evidence type="ECO:0000305" key="26"/>
<evidence type="ECO:0007829" key="27">
    <source>
        <dbReference type="PDB" id="1V04"/>
    </source>
</evidence>
<organism>
    <name type="scientific">Homo sapiens</name>
    <name type="common">Human</name>
    <dbReference type="NCBI Taxonomy" id="9606"/>
    <lineage>
        <taxon>Eukaryota</taxon>
        <taxon>Metazoa</taxon>
        <taxon>Chordata</taxon>
        <taxon>Craniata</taxon>
        <taxon>Vertebrata</taxon>
        <taxon>Euteleostomi</taxon>
        <taxon>Mammalia</taxon>
        <taxon>Eutheria</taxon>
        <taxon>Euarchontoglires</taxon>
        <taxon>Primates</taxon>
        <taxon>Haplorrhini</taxon>
        <taxon>Catarrhini</taxon>
        <taxon>Hominidae</taxon>
        <taxon>Homo</taxon>
    </lineage>
</organism>
<protein>
    <recommendedName>
        <fullName evidence="25">Serum paraoxonase/arylesterase 1</fullName>
        <shortName evidence="24">PON 1</shortName>
        <ecNumber evidence="6 7 11 12 20">3.1.1.2</ecNumber>
        <ecNumber evidence="6 7">3.1.1.81</ecNumber>
        <ecNumber evidence="6 7 11 12 20">3.1.8.1</ecNumber>
    </recommendedName>
    <alternativeName>
        <fullName>Aromatic esterase 1</fullName>
        <shortName>A-esterase 1</shortName>
    </alternativeName>
    <alternativeName>
        <fullName>K-45</fullName>
    </alternativeName>
    <alternativeName>
        <fullName>Serum aryldialkylphosphatase 1</fullName>
    </alternativeName>
</protein>
<reference key="1">
    <citation type="journal article" date="1991" name="Biochemistry">
        <title>Characterization of cDNA clones encoding rabbit and human serum paraoxonase: the mature protein retains its signal sequence.</title>
        <authorList>
            <person name="Hassett C."/>
            <person name="Richter R.J."/>
            <person name="Humbert R."/>
            <person name="Chapline C."/>
            <person name="Crabb J.W."/>
            <person name="Omiecinski C.J."/>
            <person name="Furlong C.E."/>
        </authorList>
    </citation>
    <scope>NUCLEOTIDE SEQUENCE [MRNA]</scope>
    <scope>VARIANTS MET-55 AND ARG-192</scope>
    <source>
        <tissue>Liver</tissue>
    </source>
</reference>
<reference key="2">
    <citation type="journal article" date="1993" name="Am. J. Hum. Genet.">
        <title>Molecular basis for the polymorphic forms of human serum paraoxonase/arylesterase: glutamine or arginine at position 191, for the respective A or B allozymes.</title>
        <authorList>
            <person name="Adkins S."/>
            <person name="Gan K.N."/>
            <person name="Mody M."/>
            <person name="La Du B.N."/>
        </authorList>
    </citation>
    <scope>NUCLEOTIDE SEQUENCE [GENOMIC DNA]</scope>
    <scope>POLYMORPHISM</scope>
    <scope>VARIANTS MET-55 AND ARG-192</scope>
</reference>
<reference key="3">
    <citation type="journal article" date="1993" name="Chem. Biol. Interact.">
        <title>Studies on human serum paraoxonase/arylesterase.</title>
        <authorList>
            <person name="La Du B.N."/>
            <person name="Adkins S."/>
            <person name="Kuo C.L."/>
            <person name="Lipsig D."/>
        </authorList>
    </citation>
    <scope>NUCLEOTIDE SEQUENCE [MRNA]</scope>
    <scope>CATALYTIC ACTIVITY</scope>
    <scope>VARIANTS MET-55 AND ARG-192</scope>
    <source>
        <tissue>Liver</tissue>
    </source>
</reference>
<reference key="4">
    <citation type="journal article" date="1993" name="Chem. Biol. Interact.">
        <title>Human and rabbit paraoxonases: purification, cloning, sequencing, mapping and role of polymorphism in organophosphate detoxification.</title>
        <authorList>
            <person name="Furlong C.E."/>
            <person name="Costa L.G."/>
            <person name="Hassett C."/>
            <person name="Richter R.J."/>
            <person name="Sundstrom J.A."/>
            <person name="Adler D.A."/>
            <person name="Disteche C.M."/>
            <person name="Omiecinski C.J."/>
            <person name="Chapline C."/>
            <person name="Crabb J.W."/>
        </authorList>
    </citation>
    <scope>NUCLEOTIDE SEQUENCE [MRNA]</scope>
    <scope>VARIANTS MET-55 AND ARG-192</scope>
    <scope>CHARACTERIZATION</scope>
    <source>
        <tissue>Liver</tissue>
    </source>
</reference>
<reference key="5">
    <citation type="journal article" date="1996" name="Genomics">
        <title>Structural organization of the human PON1 gene.</title>
        <authorList>
            <person name="Clendenning J.B."/>
            <person name="Humbert R."/>
            <person name="Green E.D."/>
            <person name="Wood C."/>
            <person name="Traver D."/>
            <person name="Furlong C.E."/>
        </authorList>
    </citation>
    <scope>NUCLEOTIDE SEQUENCE [GENOMIC DNA]</scope>
    <scope>VARIANT MET-55</scope>
    <source>
        <tissue>Lymphoblast</tissue>
    </source>
</reference>
<reference key="6">
    <citation type="journal article" date="1997" name="Cell Res.">
        <title>Differential expression of a cDNA clone in human liver versus hepatic cancer -- highly homologous to aryl-dialkyl-phosphatase.</title>
        <authorList>
            <person name="Wang K.K."/>
            <person name="Wan D.F."/>
            <person name="Qiu X.K."/>
            <person name="Lu P.X."/>
            <person name="Gu J.R."/>
        </authorList>
    </citation>
    <scope>NUCLEOTIDE SEQUENCE [MRNA]</scope>
    <source>
        <tissue>Liver</tissue>
    </source>
</reference>
<reference key="7">
    <citation type="journal article" date="2004" name="Nat. Genet.">
        <title>Complete sequencing and characterization of 21,243 full-length human cDNAs.</title>
        <authorList>
            <person name="Ota T."/>
            <person name="Suzuki Y."/>
            <person name="Nishikawa T."/>
            <person name="Otsuki T."/>
            <person name="Sugiyama T."/>
            <person name="Irie R."/>
            <person name="Wakamatsu A."/>
            <person name="Hayashi K."/>
            <person name="Sato H."/>
            <person name="Nagai K."/>
            <person name="Kimura K."/>
            <person name="Makita H."/>
            <person name="Sekine M."/>
            <person name="Obayashi M."/>
            <person name="Nishi T."/>
            <person name="Shibahara T."/>
            <person name="Tanaka T."/>
            <person name="Ishii S."/>
            <person name="Yamamoto J."/>
            <person name="Saito K."/>
            <person name="Kawai Y."/>
            <person name="Isono Y."/>
            <person name="Nakamura Y."/>
            <person name="Nagahari K."/>
            <person name="Murakami K."/>
            <person name="Yasuda T."/>
            <person name="Iwayanagi T."/>
            <person name="Wagatsuma M."/>
            <person name="Shiratori A."/>
            <person name="Sudo H."/>
            <person name="Hosoiri T."/>
            <person name="Kaku Y."/>
            <person name="Kodaira H."/>
            <person name="Kondo H."/>
            <person name="Sugawara M."/>
            <person name="Takahashi M."/>
            <person name="Kanda K."/>
            <person name="Yokoi T."/>
            <person name="Furuya T."/>
            <person name="Kikkawa E."/>
            <person name="Omura Y."/>
            <person name="Abe K."/>
            <person name="Kamihara K."/>
            <person name="Katsuta N."/>
            <person name="Sato K."/>
            <person name="Tanikawa M."/>
            <person name="Yamazaki M."/>
            <person name="Ninomiya K."/>
            <person name="Ishibashi T."/>
            <person name="Yamashita H."/>
            <person name="Murakawa K."/>
            <person name="Fujimori K."/>
            <person name="Tanai H."/>
            <person name="Kimata M."/>
            <person name="Watanabe M."/>
            <person name="Hiraoka S."/>
            <person name="Chiba Y."/>
            <person name="Ishida S."/>
            <person name="Ono Y."/>
            <person name="Takiguchi S."/>
            <person name="Watanabe S."/>
            <person name="Yosida M."/>
            <person name="Hotuta T."/>
            <person name="Kusano J."/>
            <person name="Kanehori K."/>
            <person name="Takahashi-Fujii A."/>
            <person name="Hara H."/>
            <person name="Tanase T.-O."/>
            <person name="Nomura Y."/>
            <person name="Togiya S."/>
            <person name="Komai F."/>
            <person name="Hara R."/>
            <person name="Takeuchi K."/>
            <person name="Arita M."/>
            <person name="Imose N."/>
            <person name="Musashino K."/>
            <person name="Yuuki H."/>
            <person name="Oshima A."/>
            <person name="Sasaki N."/>
            <person name="Aotsuka S."/>
            <person name="Yoshikawa Y."/>
            <person name="Matsunawa H."/>
            <person name="Ichihara T."/>
            <person name="Shiohata N."/>
            <person name="Sano S."/>
            <person name="Moriya S."/>
            <person name="Momiyama H."/>
            <person name="Satoh N."/>
            <person name="Takami S."/>
            <person name="Terashima Y."/>
            <person name="Suzuki O."/>
            <person name="Nakagawa S."/>
            <person name="Senoh A."/>
            <person name="Mizoguchi H."/>
            <person name="Goto Y."/>
            <person name="Shimizu F."/>
            <person name="Wakebe H."/>
            <person name="Hishigaki H."/>
            <person name="Watanabe T."/>
            <person name="Sugiyama A."/>
            <person name="Takemoto M."/>
            <person name="Kawakami B."/>
            <person name="Yamazaki M."/>
            <person name="Watanabe K."/>
            <person name="Kumagai A."/>
            <person name="Itakura S."/>
            <person name="Fukuzumi Y."/>
            <person name="Fujimori Y."/>
            <person name="Komiyama M."/>
            <person name="Tashiro H."/>
            <person name="Tanigami A."/>
            <person name="Fujiwara T."/>
            <person name="Ono T."/>
            <person name="Yamada K."/>
            <person name="Fujii Y."/>
            <person name="Ozaki K."/>
            <person name="Hirao M."/>
            <person name="Ohmori Y."/>
            <person name="Kawabata A."/>
            <person name="Hikiji T."/>
            <person name="Kobatake N."/>
            <person name="Inagaki H."/>
            <person name="Ikema Y."/>
            <person name="Okamoto S."/>
            <person name="Okitani R."/>
            <person name="Kawakami T."/>
            <person name="Noguchi S."/>
            <person name="Itoh T."/>
            <person name="Shigeta K."/>
            <person name="Senba T."/>
            <person name="Matsumura K."/>
            <person name="Nakajima Y."/>
            <person name="Mizuno T."/>
            <person name="Morinaga M."/>
            <person name="Sasaki M."/>
            <person name="Togashi T."/>
            <person name="Oyama M."/>
            <person name="Hata H."/>
            <person name="Watanabe M."/>
            <person name="Komatsu T."/>
            <person name="Mizushima-Sugano J."/>
            <person name="Satoh T."/>
            <person name="Shirai Y."/>
            <person name="Takahashi Y."/>
            <person name="Nakagawa K."/>
            <person name="Okumura K."/>
            <person name="Nagase T."/>
            <person name="Nomura N."/>
            <person name="Kikuchi H."/>
            <person name="Masuho Y."/>
            <person name="Yamashita R."/>
            <person name="Nakai K."/>
            <person name="Yada T."/>
            <person name="Nakamura Y."/>
            <person name="Ohara O."/>
            <person name="Isogai T."/>
            <person name="Sugano S."/>
        </authorList>
    </citation>
    <scope>NUCLEOTIDE SEQUENCE [LARGE SCALE MRNA]</scope>
    <scope>VARIANT MET-55</scope>
    <source>
        <tissue>Liver</tissue>
    </source>
</reference>
<reference key="8">
    <citation type="submission" date="2002-08" db="EMBL/GenBank/DDBJ databases">
        <authorList>
            <consortium name="SeattleSNPs variation discovery resource"/>
        </authorList>
    </citation>
    <scope>NUCLEOTIDE SEQUENCE [GENOMIC DNA]</scope>
    <scope>VARIANT ARG-192</scope>
</reference>
<reference key="9">
    <citation type="journal article" date="2003" name="Nature">
        <title>The DNA sequence of human chromosome 7.</title>
        <authorList>
            <person name="Hillier L.W."/>
            <person name="Fulton R.S."/>
            <person name="Fulton L.A."/>
            <person name="Graves T.A."/>
            <person name="Pepin K.H."/>
            <person name="Wagner-McPherson C."/>
            <person name="Layman D."/>
            <person name="Maas J."/>
            <person name="Jaeger S."/>
            <person name="Walker R."/>
            <person name="Wylie K."/>
            <person name="Sekhon M."/>
            <person name="Becker M.C."/>
            <person name="O'Laughlin M.D."/>
            <person name="Schaller M.E."/>
            <person name="Fewell G.A."/>
            <person name="Delehaunty K.D."/>
            <person name="Miner T.L."/>
            <person name="Nash W.E."/>
            <person name="Cordes M."/>
            <person name="Du H."/>
            <person name="Sun H."/>
            <person name="Edwards J."/>
            <person name="Bradshaw-Cordum H."/>
            <person name="Ali J."/>
            <person name="Andrews S."/>
            <person name="Isak A."/>
            <person name="Vanbrunt A."/>
            <person name="Nguyen C."/>
            <person name="Du F."/>
            <person name="Lamar B."/>
            <person name="Courtney L."/>
            <person name="Kalicki J."/>
            <person name="Ozersky P."/>
            <person name="Bielicki L."/>
            <person name="Scott K."/>
            <person name="Holmes A."/>
            <person name="Harkins R."/>
            <person name="Harris A."/>
            <person name="Strong C.M."/>
            <person name="Hou S."/>
            <person name="Tomlinson C."/>
            <person name="Dauphin-Kohlberg S."/>
            <person name="Kozlowicz-Reilly A."/>
            <person name="Leonard S."/>
            <person name="Rohlfing T."/>
            <person name="Rock S.M."/>
            <person name="Tin-Wollam A.-M."/>
            <person name="Abbott A."/>
            <person name="Minx P."/>
            <person name="Maupin R."/>
            <person name="Strowmatt C."/>
            <person name="Latreille P."/>
            <person name="Miller N."/>
            <person name="Johnson D."/>
            <person name="Murray J."/>
            <person name="Woessner J.P."/>
            <person name="Wendl M.C."/>
            <person name="Yang S.-P."/>
            <person name="Schultz B.R."/>
            <person name="Wallis J.W."/>
            <person name="Spieth J."/>
            <person name="Bieri T.A."/>
            <person name="Nelson J.O."/>
            <person name="Berkowicz N."/>
            <person name="Wohldmann P.E."/>
            <person name="Cook L.L."/>
            <person name="Hickenbotham M.T."/>
            <person name="Eldred J."/>
            <person name="Williams D."/>
            <person name="Bedell J.A."/>
            <person name="Mardis E.R."/>
            <person name="Clifton S.W."/>
            <person name="Chissoe S.L."/>
            <person name="Marra M.A."/>
            <person name="Raymond C."/>
            <person name="Haugen E."/>
            <person name="Gillett W."/>
            <person name="Zhou Y."/>
            <person name="James R."/>
            <person name="Phelps K."/>
            <person name="Iadanoto S."/>
            <person name="Bubb K."/>
            <person name="Simms E."/>
            <person name="Levy R."/>
            <person name="Clendenning J."/>
            <person name="Kaul R."/>
            <person name="Kent W.J."/>
            <person name="Furey T.S."/>
            <person name="Baertsch R.A."/>
            <person name="Brent M.R."/>
            <person name="Keibler E."/>
            <person name="Flicek P."/>
            <person name="Bork P."/>
            <person name="Suyama M."/>
            <person name="Bailey J.A."/>
            <person name="Portnoy M.E."/>
            <person name="Torrents D."/>
            <person name="Chinwalla A.T."/>
            <person name="Gish W.R."/>
            <person name="Eddy S.R."/>
            <person name="McPherson J.D."/>
            <person name="Olson M.V."/>
            <person name="Eichler E.E."/>
            <person name="Green E.D."/>
            <person name="Waterston R.H."/>
            <person name="Wilson R.K."/>
        </authorList>
    </citation>
    <scope>NUCLEOTIDE SEQUENCE [LARGE SCALE GENOMIC DNA]</scope>
</reference>
<reference key="10">
    <citation type="journal article" date="2003" name="Science">
        <title>Human chromosome 7: DNA sequence and biology.</title>
        <authorList>
            <person name="Scherer S.W."/>
            <person name="Cheung J."/>
            <person name="MacDonald J.R."/>
            <person name="Osborne L.R."/>
            <person name="Nakabayashi K."/>
            <person name="Herbrick J.-A."/>
            <person name="Carson A.R."/>
            <person name="Parker-Katiraee L."/>
            <person name="Skaug J."/>
            <person name="Khaja R."/>
            <person name="Zhang J."/>
            <person name="Hudek A.K."/>
            <person name="Li M."/>
            <person name="Haddad M."/>
            <person name="Duggan G.E."/>
            <person name="Fernandez B.A."/>
            <person name="Kanematsu E."/>
            <person name="Gentles S."/>
            <person name="Christopoulos C.C."/>
            <person name="Choufani S."/>
            <person name="Kwasnicka D."/>
            <person name="Zheng X.H."/>
            <person name="Lai Z."/>
            <person name="Nusskern D.R."/>
            <person name="Zhang Q."/>
            <person name="Gu Z."/>
            <person name="Lu F."/>
            <person name="Zeesman S."/>
            <person name="Nowaczyk M.J."/>
            <person name="Teshima I."/>
            <person name="Chitayat D."/>
            <person name="Shuman C."/>
            <person name="Weksberg R."/>
            <person name="Zackai E.H."/>
            <person name="Grebe T.A."/>
            <person name="Cox S.R."/>
            <person name="Kirkpatrick S.J."/>
            <person name="Rahman N."/>
            <person name="Friedman J.M."/>
            <person name="Heng H.H.Q."/>
            <person name="Pelicci P.G."/>
            <person name="Lo-Coco F."/>
            <person name="Belloni E."/>
            <person name="Shaffer L.G."/>
            <person name="Pober B."/>
            <person name="Morton C.C."/>
            <person name="Gusella J.F."/>
            <person name="Bruns G.A.P."/>
            <person name="Korf B.R."/>
            <person name="Quade B.J."/>
            <person name="Ligon A.H."/>
            <person name="Ferguson H."/>
            <person name="Higgins A.W."/>
            <person name="Leach N.T."/>
            <person name="Herrick S.R."/>
            <person name="Lemyre E."/>
            <person name="Farra C.G."/>
            <person name="Kim H.-G."/>
            <person name="Summers A.M."/>
            <person name="Gripp K.W."/>
            <person name="Roberts W."/>
            <person name="Szatmari P."/>
            <person name="Winsor E.J.T."/>
            <person name="Grzeschik K.-H."/>
            <person name="Teebi A."/>
            <person name="Minassian B.A."/>
            <person name="Kere J."/>
            <person name="Armengol L."/>
            <person name="Pujana M.A."/>
            <person name="Estivill X."/>
            <person name="Wilson M.D."/>
            <person name="Koop B.F."/>
            <person name="Tosi S."/>
            <person name="Moore G.E."/>
            <person name="Boright A.P."/>
            <person name="Zlotorynski E."/>
            <person name="Kerem B."/>
            <person name="Kroisel P.M."/>
            <person name="Petek E."/>
            <person name="Oscier D.G."/>
            <person name="Mould S.J."/>
            <person name="Doehner H."/>
            <person name="Doehner K."/>
            <person name="Rommens J.M."/>
            <person name="Vincent J.B."/>
            <person name="Venter J.C."/>
            <person name="Li P.W."/>
            <person name="Mural R.J."/>
            <person name="Adams M.D."/>
            <person name="Tsui L.-C."/>
        </authorList>
    </citation>
    <scope>NUCLEOTIDE SEQUENCE [LARGE SCALE GENOMIC DNA]</scope>
</reference>
<reference key="11">
    <citation type="submission" date="2005-09" db="EMBL/GenBank/DDBJ databases">
        <authorList>
            <person name="Mural R.J."/>
            <person name="Istrail S."/>
            <person name="Sutton G.G."/>
            <person name="Florea L."/>
            <person name="Halpern A.L."/>
            <person name="Mobarry C.M."/>
            <person name="Lippert R."/>
            <person name="Walenz B."/>
            <person name="Shatkay H."/>
            <person name="Dew I."/>
            <person name="Miller J.R."/>
            <person name="Flanigan M.J."/>
            <person name="Edwards N.J."/>
            <person name="Bolanos R."/>
            <person name="Fasulo D."/>
            <person name="Halldorsson B.V."/>
            <person name="Hannenhalli S."/>
            <person name="Turner R."/>
            <person name="Yooseph S."/>
            <person name="Lu F."/>
            <person name="Nusskern D.R."/>
            <person name="Shue B.C."/>
            <person name="Zheng X.H."/>
            <person name="Zhong F."/>
            <person name="Delcher A.L."/>
            <person name="Huson D.H."/>
            <person name="Kravitz S.A."/>
            <person name="Mouchard L."/>
            <person name="Reinert K."/>
            <person name="Remington K.A."/>
            <person name="Clark A.G."/>
            <person name="Waterman M.S."/>
            <person name="Eichler E.E."/>
            <person name="Adams M.D."/>
            <person name="Hunkapiller M.W."/>
            <person name="Myers E.W."/>
            <person name="Venter J.C."/>
        </authorList>
    </citation>
    <scope>NUCLEOTIDE SEQUENCE [LARGE SCALE GENOMIC DNA]</scope>
</reference>
<reference key="12">
    <citation type="journal article" date="2004" name="Genome Res.">
        <title>The status, quality, and expansion of the NIH full-length cDNA project: the Mammalian Gene Collection (MGC).</title>
        <authorList>
            <consortium name="The MGC Project Team"/>
        </authorList>
    </citation>
    <scope>NUCLEOTIDE SEQUENCE [LARGE SCALE MRNA]</scope>
    <source>
        <tissue>Brain</tissue>
    </source>
</reference>
<reference key="13">
    <citation type="journal article" date="1993" name="Eur. J. Biochem.">
        <title>Identification of a distinct human high-density lipoprotein subspecies defined by a lipoprotein-associated protein, K-45. Identity of K-45 with paraoxonase.</title>
        <authorList>
            <person name="Blatter M.-C."/>
            <person name="James R.W."/>
            <person name="Messmer S."/>
            <person name="Barja F."/>
            <person name="Pometta D."/>
        </authorList>
    </citation>
    <scope>PROTEIN SEQUENCE OF 2-21</scope>
    <scope>TISSUE SPECIFICITY</scope>
</reference>
<reference key="14">
    <citation type="journal article" date="1994" name="Biochemistry">
        <title>Apolipoprotein J is associated with paraoxonase in human plasma.</title>
        <authorList>
            <person name="Kelso G.J."/>
            <person name="Stuart W.D."/>
            <person name="Richter R.J."/>
            <person name="Furlong C.E."/>
            <person name="Jordan-Starck T.C."/>
            <person name="Harmony J.A.K."/>
        </authorList>
    </citation>
    <scope>PROTEIN SEQUENCE OF 2-21; 234-244; 291-305 AND 350-355</scope>
    <scope>INTERACTION WITH CLU</scope>
    <scope>TISSUE SPECIFICITY</scope>
    <scope>DISULFIDE BOND</scope>
    <source>
        <tissue>Plasma</tissue>
    </source>
</reference>
<reference key="15">
    <citation type="journal article" date="1991" name="Biochemistry">
        <title>Purification of rabbit and human serum paraoxonase.</title>
        <authorList>
            <person name="Furlong C.E."/>
            <person name="Richter R.J."/>
            <person name="Chapline C."/>
            <person name="Crabb J.W."/>
        </authorList>
    </citation>
    <scope>PROTEIN SEQUENCE OF 2-11</scope>
    <scope>CATALYTIC ACTIVITY</scope>
</reference>
<reference key="16">
    <citation type="journal article" date="1991" name="Drug Metab. Dispos.">
        <title>Purification of human serum paraoxonase/arylesterase. Evidence for one esterase catalyzing both activities.</title>
        <authorList>
            <person name="Gan K.N."/>
            <person name="Smolen A."/>
            <person name="Eckerson H.W."/>
            <person name="La Du B.N."/>
        </authorList>
    </citation>
    <scope>CATALYTIC ACTIVITY</scope>
</reference>
<reference key="17">
    <citation type="journal article" date="1995" name="Proc. Natl. Acad. Sci. U.S.A.">
        <title>Reconsideration of the catalytic center and mechanism of mammalian paraoxonase/arylesterase.</title>
        <authorList>
            <person name="Sorenson R.C."/>
            <person name="Primo-Parmo S.L."/>
            <person name="Kuo C.-L."/>
            <person name="Adkins S."/>
            <person name="Lockridge O."/>
            <person name="La Du B.N."/>
        </authorList>
    </citation>
    <scope>MUTAGENESIS OF CYS-284</scope>
</reference>
<reference key="18">
    <citation type="journal article" date="1999" name="Arterioscler. Thromb. Vasc. Biol.">
        <title>Human serum paraoxonase/arylesterase's retained hydrophobic N-terminal leader sequence associates with HDLs by binding phospholipids: apolipoprotein A-I stabilizes activity.</title>
        <authorList>
            <person name="Sorenson R.C."/>
            <person name="Bisgaier C.L."/>
            <person name="Aviram M."/>
            <person name="Hsu C."/>
            <person name="Billecke S."/>
            <person name="La Du B.N."/>
        </authorList>
    </citation>
    <scope>MUTAGENESIS OF 20-HIS-GLN-21</scope>
    <scope>FUNCTION OF THE UNCLEAVED SIGNAL PEPTIDE</scope>
</reference>
<reference key="19">
    <citation type="journal article" date="2004" name="Proteomics">
        <title>Screening for N-glycosylated proteins by liquid chromatography mass spectrometry.</title>
        <authorList>
            <person name="Bunkenborg J."/>
            <person name="Pilch B.J."/>
            <person name="Podtelejnikov A.V."/>
            <person name="Wisniewski J.R."/>
        </authorList>
    </citation>
    <scope>GLYCOSYLATION [LARGE SCALE ANALYSIS] AT ASN-253</scope>
    <source>
        <tissue>Plasma</tissue>
    </source>
</reference>
<reference key="20">
    <citation type="journal article" date="2005" name="J. Lipid Res.">
        <title>Human paraoxonases (PON1, PON2, and PON3) are lactonases with overlapping and distinct substrate specificities.</title>
        <authorList>
            <person name="Draganov D.I."/>
            <person name="Teiber J.F."/>
            <person name="Speelman A."/>
            <person name="Osawa Y."/>
            <person name="Sunahara R."/>
            <person name="La Du B.N."/>
        </authorList>
    </citation>
    <scope>FUNCTION</scope>
    <scope>CATALYTIC ACTIVITY</scope>
    <scope>SUBUNIT</scope>
</reference>
<reference key="21">
    <citation type="journal article" date="2005" name="J. Proteome Res.">
        <title>Human plasma N-glycoproteome analysis by immunoaffinity subtraction, hydrazide chemistry, and mass spectrometry.</title>
        <authorList>
            <person name="Liu T."/>
            <person name="Qian W.-J."/>
            <person name="Gritsenko M.A."/>
            <person name="Camp D.G. II"/>
            <person name="Monroe M.E."/>
            <person name="Moore R.J."/>
            <person name="Smith R.D."/>
        </authorList>
    </citation>
    <scope>GLYCOSYLATION [LARGE SCALE ANALYSIS] AT ASN-253 AND ASN-324</scope>
    <source>
        <tissue>Plasma</tissue>
    </source>
</reference>
<reference key="22">
    <citation type="journal article" date="2006" name="Structure">
        <title>Serendipitous discovery and X-ray structure of a human phosphate binding apolipoprotein.</title>
        <authorList>
            <person name="Morales R."/>
            <person name="Berna A."/>
            <person name="Carpentier P."/>
            <person name="Contreras-Martel C."/>
            <person name="Renault F."/>
            <person name="Nicodeme M."/>
            <person name="Chesne-Seck M.-L."/>
            <person name="Bernier F."/>
            <person name="Dupuy J."/>
            <person name="Schaeffer C."/>
            <person name="Diemer H."/>
            <person name="van Dorsselaer A."/>
            <person name="Fontecilla-Camps J.C."/>
            <person name="Masson P."/>
            <person name="Rochu D."/>
            <person name="Chabriere E."/>
        </authorList>
    </citation>
    <scope>INTERACTION WITH HPBP</scope>
</reference>
<reference key="23">
    <citation type="journal article" date="2009" name="J. Proteome Res.">
        <title>Glycoproteomics analysis of human liver tissue by combination of multiple enzyme digestion and hydrazide chemistry.</title>
        <authorList>
            <person name="Chen R."/>
            <person name="Jiang X."/>
            <person name="Sun D."/>
            <person name="Han G."/>
            <person name="Wang F."/>
            <person name="Ye M."/>
            <person name="Wang L."/>
            <person name="Zou H."/>
        </authorList>
    </citation>
    <scope>GLYCOSYLATION [LARGE SCALE ANALYSIS] AT ASN-253 AND ASN-324</scope>
    <source>
        <tissue>Liver</tissue>
    </source>
</reference>
<reference key="24">
    <citation type="journal article" date="2014" name="J. Proteomics">
        <title>An enzyme assisted RP-RPLC approach for in-depth analysis of human liver phosphoproteome.</title>
        <authorList>
            <person name="Bian Y."/>
            <person name="Song C."/>
            <person name="Cheng K."/>
            <person name="Dong M."/>
            <person name="Wang F."/>
            <person name="Huang J."/>
            <person name="Sun D."/>
            <person name="Wang L."/>
            <person name="Ye M."/>
            <person name="Zou H."/>
        </authorList>
    </citation>
    <scope>IDENTIFICATION BY MASS SPECTROMETRY [LARGE SCALE ANALYSIS]</scope>
    <source>
        <tissue>Liver</tissue>
    </source>
</reference>
<reference key="25">
    <citation type="journal article" date="2004" name="Nat. Struct. Mol. Biol.">
        <title>Structure and evolution of the serum paraoxonase family of detoxifying and anti-atherosclerotic enzymes.</title>
        <authorList>
            <person name="Harel M."/>
            <person name="Aharoni A."/>
            <person name="Gaidukov L."/>
            <person name="Brumshtein B."/>
            <person name="Khersonsky O."/>
            <person name="Meged R."/>
            <person name="Dvir H."/>
            <person name="Ravelli R.B.G."/>
            <person name="McCarthy A."/>
            <person name="Toker L."/>
            <person name="Silman I."/>
            <person name="Sussman J.L."/>
            <person name="Tawfik D.S."/>
        </authorList>
    </citation>
    <scope>X-RAY CRYSTALLOGRAPHY (2.2 ANGSTROMS) IN COMPLEX WITH CALCIUM IONS</scope>
    <scope>MUTAGENESIS OF HIS-115 AND HIS-134</scope>
    <scope>CATALYTIC ACTIVITY</scope>
    <scope>DISULFIDE BOND</scope>
</reference>
<reference key="26">
    <citation type="journal article" date="1993" name="Nat. Genet.">
        <title>The molecular basis of the human serum paraoxonase activity polymorphism.</title>
        <authorList>
            <person name="Humbert R."/>
            <person name="Adler D.A."/>
            <person name="Disteche C.M."/>
            <person name="Hassett C."/>
            <person name="Omiecinski C.J."/>
            <person name="Furlong C.E."/>
        </authorList>
    </citation>
    <scope>POLYMORPHISM</scope>
    <scope>VARIANT ARG-192</scope>
    <scope>CHARACTERIZATION OF VARIANT ARG-192</scope>
</reference>
<reference key="27">
    <citation type="journal article" date="1998" name="J. Clin. Endocrinol. Metab.">
        <title>A variant of paraoxonase (PON1) gene is associated with diabetic retinopathy in IDDM.</title>
        <authorList>
            <person name="Kao Y.-L."/>
            <person name="Donaghue K."/>
            <person name="Chan A."/>
            <person name="Knight J."/>
            <person name="Silink M."/>
        </authorList>
    </citation>
    <scope>ASSOCIATION WITH DIABETIC RETINOPATHY SUSCEPTIBILITY</scope>
</reference>
<reference key="28">
    <citation type="journal article" date="2003" name="J. Natl. Cancer Inst.">
        <title>New paraoxonase 1 polymorphism I102V and the risk of prostate cancer in Finnish men.</title>
        <authorList>
            <person name="Marchesani M."/>
            <person name="Hakkarainen A."/>
            <person name="Tuomainen T.P."/>
            <person name="Kaikkonen J."/>
            <person name="Pukkala E."/>
            <person name="Uimari P."/>
            <person name="Seppala E."/>
            <person name="Matikainen M."/>
            <person name="Kallioniemi O.-P."/>
            <person name="Schleutker J."/>
            <person name="Lehtimaki T."/>
            <person name="Salonen J.T."/>
        </authorList>
    </citation>
    <scope>VARIANT VAL-102</scope>
</reference>
<reference key="29">
    <citation type="journal article" date="2008" name="Nature">
        <title>DNA sequencing of a cytogenetically normal acute myeloid leukaemia genome.</title>
        <authorList>
            <person name="Ley T.J."/>
            <person name="Mardis E.R."/>
            <person name="Ding L."/>
            <person name="Fulton B."/>
            <person name="McLellan M.D."/>
            <person name="Chen K."/>
            <person name="Dooling D."/>
            <person name="Dunford-Shore B.H."/>
            <person name="McGrath S."/>
            <person name="Hickenbotham M."/>
            <person name="Cook L."/>
            <person name="Abbott R."/>
            <person name="Larson D.E."/>
            <person name="Koboldt D.C."/>
            <person name="Pohl C."/>
            <person name="Smith S."/>
            <person name="Hawkins A."/>
            <person name="Abbott S."/>
            <person name="Locke D."/>
            <person name="Hillier L.W."/>
            <person name="Miner T."/>
            <person name="Fulton L."/>
            <person name="Magrini V."/>
            <person name="Wylie T."/>
            <person name="Glasscock J."/>
            <person name="Conyers J."/>
            <person name="Sander N."/>
            <person name="Shi X."/>
            <person name="Osborne J.R."/>
            <person name="Minx P."/>
            <person name="Gordon D."/>
            <person name="Chinwalla A."/>
            <person name="Zhao Y."/>
            <person name="Ries R.E."/>
            <person name="Payton J.E."/>
            <person name="Westervelt P."/>
            <person name="Tomasson M.H."/>
            <person name="Watson M."/>
            <person name="Baty J."/>
            <person name="Ivanovich J."/>
            <person name="Heath S."/>
            <person name="Shannon W.D."/>
            <person name="Nagarajan R."/>
            <person name="Walter M.J."/>
            <person name="Link D.C."/>
            <person name="Graubert T.A."/>
            <person name="DiPersio J.F."/>
            <person name="Wilson R.K."/>
        </authorList>
    </citation>
    <scope>VARIANT [LARGE SCALE ANALYSIS] ARG-192</scope>
</reference>
<gene>
    <name type="primary">PON1</name>
    <name type="synonym">PON</name>
</gene>
<sequence>MAKLIALTLLGMGLALFRNHQSSYQTRLNALREVQPVELPNCNLVKGIETGSEDLEILPNGLAFISSGLKYPGIKSFNPNSPGKILLMDLNEEDPTVLELGITGSKFDVSSFNPHGISTFTDEDNAMYLLVVNHPDAKSTVELFKFQEEEKSLLHLKTIRHKLLPNLNDIVAVGPEHFYGTNDHYFLDPYLQSWEMYLGLAWSYVVYYSPSEVRVVAEGFDFANGINISPDGKYVYIAELLAHKIHVYEKHANWTLTPLKSLDFNTLVDNISVDPETGDLWVGCHPNGMKIFFYDSENPPASEVLRIQNILTEEPKVTQVYAENGTVLQGSTVASVYKGKLLIGTVFHKALYCEL</sequence>
<name>PON1_HUMAN</name>
<comment type="function">
    <text evidence="2 7">Hydrolyzes the toxic metabolites of a variety of organophosphorus insecticides. Capable of hydrolyzing a broad spectrum of organophosphate substrates and lactones, and a number of aromatic carboxylic acid esters. Mediates an enzymatic protection of low density lipoproteins against oxidative modification and the consequent series of events leading to atheroma formation.</text>
</comment>
<comment type="catalytic activity">
    <reaction evidence="6 7 11 12 20">
        <text>a phenyl acetate + H2O = a phenol + acetate + H(+)</text>
        <dbReference type="Rhea" id="RHEA:17309"/>
        <dbReference type="ChEBI" id="CHEBI:15377"/>
        <dbReference type="ChEBI" id="CHEBI:15378"/>
        <dbReference type="ChEBI" id="CHEBI:30089"/>
        <dbReference type="ChEBI" id="CHEBI:33853"/>
        <dbReference type="ChEBI" id="CHEBI:140310"/>
        <dbReference type="EC" id="3.1.1.2"/>
    </reaction>
</comment>
<comment type="catalytic activity">
    <reaction evidence="6 7 11 12 20">
        <text>An aryl dialkyl phosphate + H2O = dialkyl phosphate + an aryl alcohol.</text>
        <dbReference type="EC" id="3.1.8.1"/>
    </reaction>
</comment>
<comment type="catalytic activity">
    <reaction evidence="6 7">
        <text>an N-acyl-L-homoserine lactone + H2O = an N-acyl-L-homoserine + H(+)</text>
        <dbReference type="Rhea" id="RHEA:22576"/>
        <dbReference type="ChEBI" id="CHEBI:15377"/>
        <dbReference type="ChEBI" id="CHEBI:15378"/>
        <dbReference type="ChEBI" id="CHEBI:55474"/>
        <dbReference type="ChEBI" id="CHEBI:58921"/>
        <dbReference type="EC" id="3.1.1.81"/>
    </reaction>
</comment>
<comment type="cofactor">
    <cofactor>
        <name>Ca(2+)</name>
        <dbReference type="ChEBI" id="CHEBI:29108"/>
    </cofactor>
    <text>Binds 2 calcium ions per subunit.</text>
</comment>
<comment type="subunit">
    <text evidence="6 7 9 18">Homodimer. Heterooligomer with phosphate-binding protein (HPBP). Interacts with CLU.</text>
</comment>
<comment type="subcellular location">
    <subcellularLocation>
        <location>Secreted</location>
        <location>Extracellular space</location>
    </subcellularLocation>
</comment>
<comment type="tissue specificity">
    <text evidence="18 19">Plasma, associated with HDL (at protein level). Expressed in liver, but not in heart, brain, placenta, lung, skeletal muscle, kidney or pancreas.</text>
</comment>
<comment type="PTM">
    <text evidence="5 8 14">Glycosylated.</text>
</comment>
<comment type="PTM">
    <text>The signal sequence is not cleaved.</text>
</comment>
<comment type="PTM">
    <text>Present in two forms, form B contains a disulfide bond, form A does not.</text>
</comment>
<comment type="polymorphism">
    <text evidence="16 17">The allelic form of the enzyme with Gln-192 (allozyme A) hydrolyzes paraoxon with a low turnover number and the one with Arg-192 (allozyme B) with a high turnover number.</text>
</comment>
<comment type="disease">
    <disease id="DI-02758">
        <name>Microvascular complications of diabetes 5</name>
        <acronym>MVCD5</acronym>
        <description>Pathological conditions that develop in numerous tissues and organs as a consequence of diabetes mellitus. They include diabetic retinopathy, diabetic nephropathy leading to end-stage renal disease, and diabetic neuropathy. Diabetic retinopathy remains the major cause of new-onset blindness among diabetic adults. It is characterized by vascular permeability and increased tissue ischemia and angiogenesis.</description>
        <dbReference type="MIM" id="612633"/>
    </disease>
    <text>Disease susceptibility is associated with variants affecting the gene represented in this entry. Homozygosity for the Leu-55 allele is strongly associated with the development of retinal disease in diabetic patients.</text>
</comment>
<comment type="miscellaneous">
    <text>The preferential association of PON1 with HDL is mediated in part by its signal peptide, by binding phospholipids directly, rather than binding apo AI. The retained signal peptide may allow transfer of the protein between phospholipid surfaces.</text>
</comment>
<comment type="similarity">
    <text evidence="26">Belongs to the paraoxonase family.</text>
</comment>
<accession>P27169</accession>
<accession>B2RA40</accession>
<accession>Q16052</accession>
<accession>Q6B0J6</accession>
<accession>Q9UCB1</accession>